<comment type="function">
    <text evidence="1">Required for nuclear membrane fusion during karyogamy.</text>
</comment>
<comment type="subcellular location">
    <subcellularLocation>
        <location evidence="1">Endoplasmic reticulum membrane</location>
        <topology evidence="1">Multi-pass membrane protein</topology>
    </subcellularLocation>
    <subcellularLocation>
        <location evidence="1">Nucleus membrane</location>
        <topology evidence="1">Multi-pass membrane protein</topology>
    </subcellularLocation>
</comment>
<comment type="similarity">
    <text evidence="3">Belongs to the KAR5 family.</text>
</comment>
<sequence>MKKILRLVFILVYTNISTFVSAHELEDAASFTADELDRLLEDPPGCIQLAMRPIFEKCVLNGIHAVDPKDRRSSAIEMSVCEFESAGVEYPAECSTTDYDTCIWKLGLVPQYWTTFSGNYRDIGLFCEGVSRNNEKEQLVLLYSNITKVFAGFRHAFYESYSKSQEMKDEMEEGFSRWSADFDIAKDQHKEFYEFVAKQQEHIKIELMKNQKVIFDFHDEQEVRFNSYSNHIVDVIDSMAVDLDIILAKLADDGIIEDMENQKSKSLDIMKSYSEDAELTLSRIVSELERVGIIQKNDVSIVENLNSGLADTSNKVSKLNKDFEDLDSHFQHTKDLIESEVSFLFANLIGEMETKLSQALENVDDRIELHFVSQLEFLDKSLNETWEAILTFKQDWQIFTSIFENFENIPKSISHFVTSGLYKTNEILTQTSYFWSTILNIPVSLLSNILRYTMAASWIAILFILISLRYGSTKSFLLVIMVLLVVFLNTHRW</sequence>
<proteinExistence type="inferred from homology"/>
<name>KAR5_PICGU</name>
<evidence type="ECO:0000250" key="1"/>
<evidence type="ECO:0000255" key="2"/>
<evidence type="ECO:0000305" key="3"/>
<accession>A5DJU3</accession>
<dbReference type="EMBL" id="CH408158">
    <property type="protein sequence ID" value="EDK39446.2"/>
    <property type="molecule type" value="Genomic_DNA"/>
</dbReference>
<dbReference type="RefSeq" id="XP_001484163.1">
    <property type="nucleotide sequence ID" value="XM_001484113.1"/>
</dbReference>
<dbReference type="SMR" id="A5DJU3"/>
<dbReference type="FunCoup" id="A5DJU3">
    <property type="interactions" value="34"/>
</dbReference>
<dbReference type="GlyCosmos" id="A5DJU3">
    <property type="glycosylation" value="3 sites, No reported glycans"/>
</dbReference>
<dbReference type="GeneID" id="5125960"/>
<dbReference type="KEGG" id="pgu:PGUG_03544"/>
<dbReference type="VEuPathDB" id="FungiDB:PGUG_03544"/>
<dbReference type="eggNOG" id="ENOG502QVCQ">
    <property type="taxonomic scope" value="Eukaryota"/>
</dbReference>
<dbReference type="HOGENOM" id="CLU_039530_0_0_1"/>
<dbReference type="InParanoid" id="A5DJU3"/>
<dbReference type="OMA" id="LSICEFQ"/>
<dbReference type="OrthoDB" id="5311848at2759"/>
<dbReference type="Proteomes" id="UP000001997">
    <property type="component" value="Unassembled WGS sequence"/>
</dbReference>
<dbReference type="GO" id="GO:0005789">
    <property type="term" value="C:endoplasmic reticulum membrane"/>
    <property type="evidence" value="ECO:0007669"/>
    <property type="project" value="UniProtKB-SubCell"/>
</dbReference>
<dbReference type="GO" id="GO:0031965">
    <property type="term" value="C:nuclear membrane"/>
    <property type="evidence" value="ECO:0007669"/>
    <property type="project" value="UniProtKB-SubCell"/>
</dbReference>
<dbReference type="GO" id="GO:0000742">
    <property type="term" value="P:karyogamy involved in conjugation with cellular fusion"/>
    <property type="evidence" value="ECO:0007669"/>
    <property type="project" value="InterPro"/>
</dbReference>
<dbReference type="GO" id="GO:0048288">
    <property type="term" value="P:nuclear membrane fusion involved in karyogamy"/>
    <property type="evidence" value="ECO:0007669"/>
    <property type="project" value="InterPro"/>
</dbReference>
<dbReference type="InterPro" id="IPR007292">
    <property type="entry name" value="Nuclear_fusion_Kar5"/>
</dbReference>
<dbReference type="PANTHER" id="PTHR28012">
    <property type="entry name" value="NUCLEAR FUSION PROTEIN KAR5"/>
    <property type="match status" value="1"/>
</dbReference>
<dbReference type="PANTHER" id="PTHR28012:SF1">
    <property type="entry name" value="NUCLEAR FUSION PROTEIN KAR5"/>
    <property type="match status" value="1"/>
</dbReference>
<dbReference type="Pfam" id="PF04163">
    <property type="entry name" value="Tht1"/>
    <property type="match status" value="1"/>
</dbReference>
<organism>
    <name type="scientific">Meyerozyma guilliermondii (strain ATCC 6260 / CBS 566 / DSM 6381 / JCM 1539 / NBRC 10279 / NRRL Y-324)</name>
    <name type="common">Yeast</name>
    <name type="synonym">Candida guilliermondii</name>
    <dbReference type="NCBI Taxonomy" id="294746"/>
    <lineage>
        <taxon>Eukaryota</taxon>
        <taxon>Fungi</taxon>
        <taxon>Dikarya</taxon>
        <taxon>Ascomycota</taxon>
        <taxon>Saccharomycotina</taxon>
        <taxon>Pichiomycetes</taxon>
        <taxon>Debaryomycetaceae</taxon>
        <taxon>Meyerozyma</taxon>
    </lineage>
</organism>
<protein>
    <recommendedName>
        <fullName>Nuclear fusion protein KAR5</fullName>
    </recommendedName>
    <alternativeName>
        <fullName>Karyogamy protein 5</fullName>
    </alternativeName>
</protein>
<reference key="1">
    <citation type="journal article" date="2009" name="Nature">
        <title>Evolution of pathogenicity and sexual reproduction in eight Candida genomes.</title>
        <authorList>
            <person name="Butler G."/>
            <person name="Rasmussen M.D."/>
            <person name="Lin M.F."/>
            <person name="Santos M.A.S."/>
            <person name="Sakthikumar S."/>
            <person name="Munro C.A."/>
            <person name="Rheinbay E."/>
            <person name="Grabherr M."/>
            <person name="Forche A."/>
            <person name="Reedy J.L."/>
            <person name="Agrafioti I."/>
            <person name="Arnaud M.B."/>
            <person name="Bates S."/>
            <person name="Brown A.J.P."/>
            <person name="Brunke S."/>
            <person name="Costanzo M.C."/>
            <person name="Fitzpatrick D.A."/>
            <person name="de Groot P.W.J."/>
            <person name="Harris D."/>
            <person name="Hoyer L.L."/>
            <person name="Hube B."/>
            <person name="Klis F.M."/>
            <person name="Kodira C."/>
            <person name="Lennard N."/>
            <person name="Logue M.E."/>
            <person name="Martin R."/>
            <person name="Neiman A.M."/>
            <person name="Nikolaou E."/>
            <person name="Quail M.A."/>
            <person name="Quinn J."/>
            <person name="Santos M.C."/>
            <person name="Schmitzberger F.F."/>
            <person name="Sherlock G."/>
            <person name="Shah P."/>
            <person name="Silverstein K.A.T."/>
            <person name="Skrzypek M.S."/>
            <person name="Soll D."/>
            <person name="Staggs R."/>
            <person name="Stansfield I."/>
            <person name="Stumpf M.P.H."/>
            <person name="Sudbery P.E."/>
            <person name="Srikantha T."/>
            <person name="Zeng Q."/>
            <person name="Berman J."/>
            <person name="Berriman M."/>
            <person name="Heitman J."/>
            <person name="Gow N.A.R."/>
            <person name="Lorenz M.C."/>
            <person name="Birren B.W."/>
            <person name="Kellis M."/>
            <person name="Cuomo C.A."/>
        </authorList>
    </citation>
    <scope>NUCLEOTIDE SEQUENCE [LARGE SCALE GENOMIC DNA]</scope>
    <source>
        <strain>ATCC 6260 / CBS 566 / DSM 6381 / JCM 1539 / NBRC 10279 / NRRL Y-324</strain>
    </source>
</reference>
<gene>
    <name type="primary">KAR5</name>
    <name type="ORF">PGUG_03544</name>
</gene>
<feature type="signal peptide" evidence="2">
    <location>
        <begin position="1"/>
        <end position="22"/>
    </location>
</feature>
<feature type="chain" id="PRO_0000308775" description="Nuclear fusion protein KAR5">
    <location>
        <begin position="23"/>
        <end position="493"/>
    </location>
</feature>
<feature type="topological domain" description="Lumenal" evidence="1">
    <location>
        <begin position="23"/>
        <end position="445"/>
    </location>
</feature>
<feature type="transmembrane region" description="Helical" evidence="2">
    <location>
        <begin position="446"/>
        <end position="466"/>
    </location>
</feature>
<feature type="topological domain" description="Cytoplasmic" evidence="1">
    <location>
        <begin position="467"/>
        <end position="469"/>
    </location>
</feature>
<feature type="transmembrane region" description="Helical" evidence="2">
    <location>
        <begin position="470"/>
        <end position="490"/>
    </location>
</feature>
<feature type="topological domain" description="Lumenal" evidence="1">
    <location>
        <begin position="491"/>
        <end position="493"/>
    </location>
</feature>
<feature type="glycosylation site" description="N-linked (GlcNAc...) asparagine" evidence="2">
    <location>
        <position position="15"/>
    </location>
</feature>
<feature type="glycosylation site" description="N-linked (GlcNAc...) asparagine" evidence="2">
    <location>
        <position position="145"/>
    </location>
</feature>
<feature type="glycosylation site" description="N-linked (GlcNAc...) asparagine" evidence="2">
    <location>
        <position position="383"/>
    </location>
</feature>
<keyword id="KW-0256">Endoplasmic reticulum</keyword>
<keyword id="KW-0325">Glycoprotein</keyword>
<keyword id="KW-0415">Karyogamy</keyword>
<keyword id="KW-0472">Membrane</keyword>
<keyword id="KW-0539">Nucleus</keyword>
<keyword id="KW-1185">Reference proteome</keyword>
<keyword id="KW-0732">Signal</keyword>
<keyword id="KW-0812">Transmembrane</keyword>
<keyword id="KW-1133">Transmembrane helix</keyword>